<keyword id="KW-0007">Acetylation</keyword>
<keyword id="KW-0113">Calvin cycle</keyword>
<keyword id="KW-0120">Carbon dioxide fixation</keyword>
<keyword id="KW-0150">Chloroplast</keyword>
<keyword id="KW-1015">Disulfide bond</keyword>
<keyword id="KW-0456">Lyase</keyword>
<keyword id="KW-0460">Magnesium</keyword>
<keyword id="KW-0479">Metal-binding</keyword>
<keyword id="KW-0488">Methylation</keyword>
<keyword id="KW-0503">Monooxygenase</keyword>
<keyword id="KW-0560">Oxidoreductase</keyword>
<keyword id="KW-0601">Photorespiration</keyword>
<keyword id="KW-0602">Photosynthesis</keyword>
<keyword id="KW-0934">Plastid</keyword>
<evidence type="ECO:0000255" key="1">
    <source>
        <dbReference type="HAMAP-Rule" id="MF_01338"/>
    </source>
</evidence>
<accession>P25828</accession>
<proteinExistence type="inferred from homology"/>
<reference key="1">
    <citation type="submission" date="1991-12" db="EMBL/GenBank/DDBJ databases">
        <title>Systematics of Caryophyllales using large subunit of ribulose-1, 5-bisphosphate carboxylase/oxygenase (rbcL) gene sequence data.</title>
        <authorList>
            <person name="Rettig J.H."/>
            <person name="Wilson H.D."/>
            <person name="Manhart J.R."/>
        </authorList>
    </citation>
    <scope>NUCLEOTIDE SEQUENCE [GENOMIC DNA]</scope>
</reference>
<geneLocation type="chloroplast"/>
<sequence length="480" mass="53079">MSPQTETKAFVGFKAGVKDYKLNYYTPQYQPLDTDILAAFRVTPQPGVPSEEAGAAVAAESSTGTWTTVWTDGLTSLDRYKGRCYHIDPVPGEDNQYICYVAYPLDLFEEGSVTNMFTSIVGNVFGFKALRALRLEDLRIPVAYIKTFQGPPHGIQVERDKLNKYGRAILGCTIKPKLGLSAKNYGRAVYECLRGGLDFTKDDENVNSQPFMRWRDRFLFCAEALYKAQAETGEIKGHYLNATAGTCEEMIKRAVFARELGAPIVMHDYLTGGFTANTSLAHYCRDNGLLLHIHRAMHAVIDRQKNHGMHFRVLAKALRLSGGDHIHAGTVVGKLEGERDITLGFVDLLRDDYIEIDDDRGIYFTQPWVSTPGVLPVASGGIHVWHMPALTEIFGDDSVLQFGGGTLGHPWGNAPGAVANRVALEACVQARNEGRDLAREGATIIREAAKWSPELAAACEVWKEIKFEFPAVDTLDKKKG</sequence>
<name>RBL_BASAL</name>
<organism>
    <name type="scientific">Basella alba</name>
    <name type="common">Malabar spinach</name>
    <name type="synonym">Basella rubra</name>
    <dbReference type="NCBI Taxonomy" id="3589"/>
    <lineage>
        <taxon>Eukaryota</taxon>
        <taxon>Viridiplantae</taxon>
        <taxon>Streptophyta</taxon>
        <taxon>Embryophyta</taxon>
        <taxon>Tracheophyta</taxon>
        <taxon>Spermatophyta</taxon>
        <taxon>Magnoliopsida</taxon>
        <taxon>eudicotyledons</taxon>
        <taxon>Gunneridae</taxon>
        <taxon>Pentapetalae</taxon>
        <taxon>Caryophyllales</taxon>
        <taxon>Cactineae</taxon>
        <taxon>Basellaceae</taxon>
        <taxon>Basella</taxon>
    </lineage>
</organism>
<protein>
    <recommendedName>
        <fullName evidence="1">Ribulose bisphosphate carboxylase large chain</fullName>
        <shortName evidence="1">RuBisCO large subunit</shortName>
        <ecNumber evidence="1">4.1.1.39</ecNumber>
    </recommendedName>
</protein>
<gene>
    <name evidence="1" type="primary">rbcL</name>
</gene>
<comment type="function">
    <text evidence="1">RuBisCO catalyzes two reactions: the carboxylation of D-ribulose 1,5-bisphosphate, the primary event in carbon dioxide fixation, as well as the oxidative fragmentation of the pentose substrate in the photorespiration process. Both reactions occur simultaneously and in competition at the same active site.</text>
</comment>
<comment type="catalytic activity">
    <reaction evidence="1">
        <text>2 (2R)-3-phosphoglycerate + 2 H(+) = D-ribulose 1,5-bisphosphate + CO2 + H2O</text>
        <dbReference type="Rhea" id="RHEA:23124"/>
        <dbReference type="ChEBI" id="CHEBI:15377"/>
        <dbReference type="ChEBI" id="CHEBI:15378"/>
        <dbReference type="ChEBI" id="CHEBI:16526"/>
        <dbReference type="ChEBI" id="CHEBI:57870"/>
        <dbReference type="ChEBI" id="CHEBI:58272"/>
        <dbReference type="EC" id="4.1.1.39"/>
    </reaction>
</comment>
<comment type="catalytic activity">
    <reaction evidence="1">
        <text>D-ribulose 1,5-bisphosphate + O2 = 2-phosphoglycolate + (2R)-3-phosphoglycerate + 2 H(+)</text>
        <dbReference type="Rhea" id="RHEA:36631"/>
        <dbReference type="ChEBI" id="CHEBI:15378"/>
        <dbReference type="ChEBI" id="CHEBI:15379"/>
        <dbReference type="ChEBI" id="CHEBI:57870"/>
        <dbReference type="ChEBI" id="CHEBI:58033"/>
        <dbReference type="ChEBI" id="CHEBI:58272"/>
    </reaction>
</comment>
<comment type="cofactor">
    <cofactor evidence="1">
        <name>Mg(2+)</name>
        <dbReference type="ChEBI" id="CHEBI:18420"/>
    </cofactor>
    <text evidence="1">Binds 1 Mg(2+) ion per subunit.</text>
</comment>
<comment type="subunit">
    <text evidence="1">Heterohexadecamer of 8 large chains and 8 small chains; disulfide-linked. The disulfide link is formed within the large subunit homodimers.</text>
</comment>
<comment type="subcellular location">
    <subcellularLocation>
        <location>Plastid</location>
        <location>Chloroplast</location>
    </subcellularLocation>
</comment>
<comment type="PTM">
    <text evidence="1">The disulfide bond which can form in the large chain dimeric partners within the hexadecamer appears to be associated with oxidative stress and protein turnover.</text>
</comment>
<comment type="miscellaneous">
    <text evidence="1">The basic functional RuBisCO is composed of a large chain homodimer in a 'head-to-tail' conformation. In form I RuBisCO this homodimer is arranged in a barrel-like tetramer with the small subunits forming a tetrameric 'cap' on each end of the 'barrel'.</text>
</comment>
<comment type="similarity">
    <text evidence="1">Belongs to the RuBisCO large chain family. Type I subfamily.</text>
</comment>
<feature type="propeptide" id="PRO_0000031135" evidence="1">
    <location>
        <begin position="1"/>
        <end position="2"/>
    </location>
</feature>
<feature type="chain" id="PRO_0000031136" description="Ribulose bisphosphate carboxylase large chain">
    <location>
        <begin position="3"/>
        <end position="480"/>
    </location>
</feature>
<feature type="active site" description="Proton acceptor" evidence="1">
    <location>
        <position position="175"/>
    </location>
</feature>
<feature type="active site" description="Proton acceptor" evidence="1">
    <location>
        <position position="294"/>
    </location>
</feature>
<feature type="binding site" description="in homodimeric partner" evidence="1">
    <location>
        <position position="123"/>
    </location>
    <ligand>
        <name>substrate</name>
    </ligand>
</feature>
<feature type="binding site" evidence="1">
    <location>
        <position position="173"/>
    </location>
    <ligand>
        <name>substrate</name>
    </ligand>
</feature>
<feature type="binding site" evidence="1">
    <location>
        <position position="177"/>
    </location>
    <ligand>
        <name>substrate</name>
    </ligand>
</feature>
<feature type="binding site" description="via carbamate group" evidence="1">
    <location>
        <position position="201"/>
    </location>
    <ligand>
        <name>Mg(2+)</name>
        <dbReference type="ChEBI" id="CHEBI:18420"/>
    </ligand>
</feature>
<feature type="binding site" evidence="1">
    <location>
        <position position="203"/>
    </location>
    <ligand>
        <name>Mg(2+)</name>
        <dbReference type="ChEBI" id="CHEBI:18420"/>
    </ligand>
</feature>
<feature type="binding site" evidence="1">
    <location>
        <position position="204"/>
    </location>
    <ligand>
        <name>Mg(2+)</name>
        <dbReference type="ChEBI" id="CHEBI:18420"/>
    </ligand>
</feature>
<feature type="binding site" evidence="1">
    <location>
        <position position="295"/>
    </location>
    <ligand>
        <name>substrate</name>
    </ligand>
</feature>
<feature type="binding site" evidence="1">
    <location>
        <position position="327"/>
    </location>
    <ligand>
        <name>substrate</name>
    </ligand>
</feature>
<feature type="binding site" evidence="1">
    <location>
        <position position="379"/>
    </location>
    <ligand>
        <name>substrate</name>
    </ligand>
</feature>
<feature type="site" description="Transition state stabilizer" evidence="1">
    <location>
        <position position="334"/>
    </location>
</feature>
<feature type="modified residue" description="N-acetylproline" evidence="1">
    <location>
        <position position="3"/>
    </location>
</feature>
<feature type="modified residue" description="N6,N6,N6-trimethyllysine" evidence="1">
    <location>
        <position position="14"/>
    </location>
</feature>
<feature type="modified residue" description="N6-carboxylysine" evidence="1">
    <location>
        <position position="201"/>
    </location>
</feature>
<feature type="disulfide bond" description="Interchain; in linked form" evidence="1">
    <location>
        <position position="247"/>
    </location>
</feature>
<dbReference type="EC" id="4.1.1.39" evidence="1"/>
<dbReference type="EMBL" id="M62564">
    <property type="protein sequence ID" value="AAA84089.1"/>
    <property type="molecule type" value="Genomic_DNA"/>
</dbReference>
<dbReference type="SMR" id="P25828"/>
<dbReference type="GO" id="GO:0009507">
    <property type="term" value="C:chloroplast"/>
    <property type="evidence" value="ECO:0007669"/>
    <property type="project" value="UniProtKB-SubCell"/>
</dbReference>
<dbReference type="GO" id="GO:0000287">
    <property type="term" value="F:magnesium ion binding"/>
    <property type="evidence" value="ECO:0007669"/>
    <property type="project" value="UniProtKB-UniRule"/>
</dbReference>
<dbReference type="GO" id="GO:0004497">
    <property type="term" value="F:monooxygenase activity"/>
    <property type="evidence" value="ECO:0007669"/>
    <property type="project" value="UniProtKB-KW"/>
</dbReference>
<dbReference type="GO" id="GO:0016984">
    <property type="term" value="F:ribulose-bisphosphate carboxylase activity"/>
    <property type="evidence" value="ECO:0007669"/>
    <property type="project" value="UniProtKB-UniRule"/>
</dbReference>
<dbReference type="GO" id="GO:0009853">
    <property type="term" value="P:photorespiration"/>
    <property type="evidence" value="ECO:0007669"/>
    <property type="project" value="UniProtKB-KW"/>
</dbReference>
<dbReference type="GO" id="GO:0019253">
    <property type="term" value="P:reductive pentose-phosphate cycle"/>
    <property type="evidence" value="ECO:0007669"/>
    <property type="project" value="UniProtKB-UniRule"/>
</dbReference>
<dbReference type="CDD" id="cd08212">
    <property type="entry name" value="RuBisCO_large_I"/>
    <property type="match status" value="1"/>
</dbReference>
<dbReference type="FunFam" id="3.20.20.110:FF:000001">
    <property type="entry name" value="Ribulose bisphosphate carboxylase large chain"/>
    <property type="match status" value="1"/>
</dbReference>
<dbReference type="FunFam" id="3.30.70.150:FF:000001">
    <property type="entry name" value="Ribulose bisphosphate carboxylase large chain"/>
    <property type="match status" value="1"/>
</dbReference>
<dbReference type="Gene3D" id="3.20.20.110">
    <property type="entry name" value="Ribulose bisphosphate carboxylase, large subunit, C-terminal domain"/>
    <property type="match status" value="1"/>
</dbReference>
<dbReference type="Gene3D" id="3.30.70.150">
    <property type="entry name" value="RuBisCO large subunit, N-terminal domain"/>
    <property type="match status" value="1"/>
</dbReference>
<dbReference type="HAMAP" id="MF_01338">
    <property type="entry name" value="RuBisCO_L_type1"/>
    <property type="match status" value="1"/>
</dbReference>
<dbReference type="InterPro" id="IPR033966">
    <property type="entry name" value="RuBisCO"/>
</dbReference>
<dbReference type="InterPro" id="IPR020878">
    <property type="entry name" value="RuBisCo_large_chain_AS"/>
</dbReference>
<dbReference type="InterPro" id="IPR000685">
    <property type="entry name" value="RuBisCO_lsu_C"/>
</dbReference>
<dbReference type="InterPro" id="IPR036376">
    <property type="entry name" value="RuBisCO_lsu_C_sf"/>
</dbReference>
<dbReference type="InterPro" id="IPR017443">
    <property type="entry name" value="RuBisCO_lsu_fd_N"/>
</dbReference>
<dbReference type="InterPro" id="IPR036422">
    <property type="entry name" value="RuBisCO_lsu_N_sf"/>
</dbReference>
<dbReference type="InterPro" id="IPR020888">
    <property type="entry name" value="RuBisCO_lsuI"/>
</dbReference>
<dbReference type="NCBIfam" id="NF003252">
    <property type="entry name" value="PRK04208.1"/>
    <property type="match status" value="1"/>
</dbReference>
<dbReference type="PANTHER" id="PTHR42704">
    <property type="entry name" value="RIBULOSE BISPHOSPHATE CARBOXYLASE"/>
    <property type="match status" value="1"/>
</dbReference>
<dbReference type="PANTHER" id="PTHR42704:SF15">
    <property type="entry name" value="RIBULOSE BISPHOSPHATE CARBOXYLASE LARGE CHAIN"/>
    <property type="match status" value="1"/>
</dbReference>
<dbReference type="Pfam" id="PF00016">
    <property type="entry name" value="RuBisCO_large"/>
    <property type="match status" value="1"/>
</dbReference>
<dbReference type="Pfam" id="PF02788">
    <property type="entry name" value="RuBisCO_large_N"/>
    <property type="match status" value="1"/>
</dbReference>
<dbReference type="SFLD" id="SFLDG01052">
    <property type="entry name" value="RuBisCO"/>
    <property type="match status" value="1"/>
</dbReference>
<dbReference type="SFLD" id="SFLDS00014">
    <property type="entry name" value="RuBisCO"/>
    <property type="match status" value="1"/>
</dbReference>
<dbReference type="SFLD" id="SFLDG00301">
    <property type="entry name" value="RuBisCO-like_proteins"/>
    <property type="match status" value="1"/>
</dbReference>
<dbReference type="SUPFAM" id="SSF51649">
    <property type="entry name" value="RuBisCo, C-terminal domain"/>
    <property type="match status" value="1"/>
</dbReference>
<dbReference type="SUPFAM" id="SSF54966">
    <property type="entry name" value="RuBisCO, large subunit, small (N-terminal) domain"/>
    <property type="match status" value="1"/>
</dbReference>
<dbReference type="PROSITE" id="PS00157">
    <property type="entry name" value="RUBISCO_LARGE"/>
    <property type="match status" value="1"/>
</dbReference>